<keyword id="KW-0010">Activator</keyword>
<keyword id="KW-0963">Cytoplasm</keyword>
<keyword id="KW-0238">DNA-binding</keyword>
<keyword id="KW-0677">Repeat</keyword>
<keyword id="KW-0684">Rhamnose metabolism</keyword>
<keyword id="KW-0804">Transcription</keyword>
<keyword id="KW-0805">Transcription regulation</keyword>
<protein>
    <recommendedName>
        <fullName evidence="1">HTH-type transcriptional activator RhaS</fullName>
    </recommendedName>
    <alternativeName>
        <fullName evidence="1">L-rhamnose operon regulatory protein RhaS</fullName>
    </alternativeName>
</protein>
<comment type="function">
    <text evidence="1">Activates expression of the rhaBAD and rhaT operons.</text>
</comment>
<comment type="subunit">
    <text evidence="1">Binds DNA as a dimer.</text>
</comment>
<comment type="subcellular location">
    <subcellularLocation>
        <location evidence="1">Cytoplasm</location>
    </subcellularLocation>
</comment>
<dbReference type="EMBL" id="AM933172">
    <property type="protein sequence ID" value="CAR35412.1"/>
    <property type="molecule type" value="Genomic_DNA"/>
</dbReference>
<dbReference type="RefSeq" id="WP_000217112.1">
    <property type="nucleotide sequence ID" value="NC_011294.1"/>
</dbReference>
<dbReference type="SMR" id="B5QWY4"/>
<dbReference type="KEGG" id="set:SEN3839"/>
<dbReference type="HOGENOM" id="CLU_000445_88_5_6"/>
<dbReference type="Proteomes" id="UP000000613">
    <property type="component" value="Chromosome"/>
</dbReference>
<dbReference type="GO" id="GO:0005737">
    <property type="term" value="C:cytoplasm"/>
    <property type="evidence" value="ECO:0007669"/>
    <property type="project" value="UniProtKB-SubCell"/>
</dbReference>
<dbReference type="GO" id="GO:0003700">
    <property type="term" value="F:DNA-binding transcription factor activity"/>
    <property type="evidence" value="ECO:0007669"/>
    <property type="project" value="UniProtKB-UniRule"/>
</dbReference>
<dbReference type="GO" id="GO:0043565">
    <property type="term" value="F:sequence-specific DNA binding"/>
    <property type="evidence" value="ECO:0007669"/>
    <property type="project" value="InterPro"/>
</dbReference>
<dbReference type="GO" id="GO:0045893">
    <property type="term" value="P:positive regulation of DNA-templated transcription"/>
    <property type="evidence" value="ECO:0007669"/>
    <property type="project" value="UniProtKB-UniRule"/>
</dbReference>
<dbReference type="GO" id="GO:0019299">
    <property type="term" value="P:rhamnose metabolic process"/>
    <property type="evidence" value="ECO:0007669"/>
    <property type="project" value="UniProtKB-UniRule"/>
</dbReference>
<dbReference type="CDD" id="cd06977">
    <property type="entry name" value="cupin_RhaR_RhaS-like_N"/>
    <property type="match status" value="1"/>
</dbReference>
<dbReference type="Gene3D" id="1.10.10.60">
    <property type="entry name" value="Homeodomain-like"/>
    <property type="match status" value="1"/>
</dbReference>
<dbReference type="Gene3D" id="2.60.120.10">
    <property type="entry name" value="Jelly Rolls"/>
    <property type="match status" value="1"/>
</dbReference>
<dbReference type="HAMAP" id="MF_01534">
    <property type="entry name" value="HTH_type_RhaS"/>
    <property type="match status" value="1"/>
</dbReference>
<dbReference type="InterPro" id="IPR003313">
    <property type="entry name" value="AraC-bd"/>
</dbReference>
<dbReference type="InterPro" id="IPR050204">
    <property type="entry name" value="AraC_XylS_family_regulators"/>
</dbReference>
<dbReference type="InterPro" id="IPR009057">
    <property type="entry name" value="Homeodomain-like_sf"/>
</dbReference>
<dbReference type="InterPro" id="IPR037923">
    <property type="entry name" value="HTH-like"/>
</dbReference>
<dbReference type="InterPro" id="IPR018060">
    <property type="entry name" value="HTH_AraC"/>
</dbReference>
<dbReference type="InterPro" id="IPR018062">
    <property type="entry name" value="HTH_AraC-typ_CS"/>
</dbReference>
<dbReference type="InterPro" id="IPR047220">
    <property type="entry name" value="RhaR_RhaS-like_N"/>
</dbReference>
<dbReference type="InterPro" id="IPR014710">
    <property type="entry name" value="RmlC-like_jellyroll"/>
</dbReference>
<dbReference type="InterPro" id="IPR020449">
    <property type="entry name" value="Tscrpt_reg_AraC-type_HTH"/>
</dbReference>
<dbReference type="InterPro" id="IPR023609">
    <property type="entry name" value="Tscrpt_reg_HTH_RhaS"/>
</dbReference>
<dbReference type="NCBIfam" id="NF010028">
    <property type="entry name" value="PRK13503.1"/>
    <property type="match status" value="1"/>
</dbReference>
<dbReference type="PANTHER" id="PTHR46796:SF13">
    <property type="entry name" value="HTH-TYPE TRANSCRIPTIONAL ACTIVATOR RHAS"/>
    <property type="match status" value="1"/>
</dbReference>
<dbReference type="PANTHER" id="PTHR46796">
    <property type="entry name" value="HTH-TYPE TRANSCRIPTIONAL ACTIVATOR RHAS-RELATED"/>
    <property type="match status" value="1"/>
</dbReference>
<dbReference type="Pfam" id="PF02311">
    <property type="entry name" value="AraC_binding"/>
    <property type="match status" value="1"/>
</dbReference>
<dbReference type="Pfam" id="PF12833">
    <property type="entry name" value="HTH_18"/>
    <property type="match status" value="1"/>
</dbReference>
<dbReference type="PRINTS" id="PR00032">
    <property type="entry name" value="HTHARAC"/>
</dbReference>
<dbReference type="SMART" id="SM00342">
    <property type="entry name" value="HTH_ARAC"/>
    <property type="match status" value="1"/>
</dbReference>
<dbReference type="SUPFAM" id="SSF46689">
    <property type="entry name" value="Homeodomain-like"/>
    <property type="match status" value="2"/>
</dbReference>
<dbReference type="SUPFAM" id="SSF51215">
    <property type="entry name" value="Regulatory protein AraC"/>
    <property type="match status" value="1"/>
</dbReference>
<dbReference type="PROSITE" id="PS00041">
    <property type="entry name" value="HTH_ARAC_FAMILY_1"/>
    <property type="match status" value="1"/>
</dbReference>
<dbReference type="PROSITE" id="PS01124">
    <property type="entry name" value="HTH_ARAC_FAMILY_2"/>
    <property type="match status" value="1"/>
</dbReference>
<feature type="chain" id="PRO_1000200960" description="HTH-type transcriptional activator RhaS">
    <location>
        <begin position="1"/>
        <end position="278"/>
    </location>
</feature>
<feature type="domain" description="HTH araC/xylS-type" evidence="1">
    <location>
        <begin position="174"/>
        <end position="272"/>
    </location>
</feature>
<feature type="DNA-binding region" description="H-T-H motif" evidence="1">
    <location>
        <begin position="191"/>
        <end position="212"/>
    </location>
</feature>
<feature type="DNA-binding region" description="H-T-H motif" evidence="1">
    <location>
        <begin position="239"/>
        <end position="262"/>
    </location>
</feature>
<feature type="site" description="Interaction with sigma-70" evidence="1">
    <location>
        <position position="241"/>
    </location>
</feature>
<feature type="site" description="Interaction with sigma-70" evidence="1">
    <location>
        <position position="250"/>
    </location>
</feature>
<organism>
    <name type="scientific">Salmonella enteritidis PT4 (strain P125109)</name>
    <dbReference type="NCBI Taxonomy" id="550537"/>
    <lineage>
        <taxon>Bacteria</taxon>
        <taxon>Pseudomonadati</taxon>
        <taxon>Pseudomonadota</taxon>
        <taxon>Gammaproteobacteria</taxon>
        <taxon>Enterobacterales</taxon>
        <taxon>Enterobacteriaceae</taxon>
        <taxon>Salmonella</taxon>
    </lineage>
</organism>
<sequence length="278" mass="32089">MTVLHSVDFFPSGKAPVAIEPRLPQAAFPEHHHDFHEIVIVEHGTGIHVFNGQPYTISGGTVCFVRDHDRHLYEHTDNLCLTNVLWRSPDAFQFLAGLDQLLPQEQDGYYPSHWRVNQSVLQQVRQLVGLMERAGDGMDAPAVANREILFMQLLVLLRRSSLMEGATNNDAKLNQLMAWLEDHFAEEVCWEAVAEQFSLSLRTLHRQLKQHTGLTPQRYLNRLRLIKARHLLRHSDHSVTEIAYRCGFGDSNHFSTLFRREFNWSPRDIRQGRDAIIQ</sequence>
<gene>
    <name evidence="1" type="primary">rhaS</name>
    <name type="ordered locus">SEN3839</name>
</gene>
<evidence type="ECO:0000255" key="1">
    <source>
        <dbReference type="HAMAP-Rule" id="MF_01534"/>
    </source>
</evidence>
<name>RHAS_SALEP</name>
<proteinExistence type="inferred from homology"/>
<accession>B5QWY4</accession>
<reference key="1">
    <citation type="journal article" date="2008" name="Genome Res.">
        <title>Comparative genome analysis of Salmonella enteritidis PT4 and Salmonella gallinarum 287/91 provides insights into evolutionary and host adaptation pathways.</title>
        <authorList>
            <person name="Thomson N.R."/>
            <person name="Clayton D.J."/>
            <person name="Windhorst D."/>
            <person name="Vernikos G."/>
            <person name="Davidson S."/>
            <person name="Churcher C."/>
            <person name="Quail M.A."/>
            <person name="Stevens M."/>
            <person name="Jones M.A."/>
            <person name="Watson M."/>
            <person name="Barron A."/>
            <person name="Layton A."/>
            <person name="Pickard D."/>
            <person name="Kingsley R.A."/>
            <person name="Bignell A."/>
            <person name="Clark L."/>
            <person name="Harris B."/>
            <person name="Ormond D."/>
            <person name="Abdellah Z."/>
            <person name="Brooks K."/>
            <person name="Cherevach I."/>
            <person name="Chillingworth T."/>
            <person name="Woodward J."/>
            <person name="Norberczak H."/>
            <person name="Lord A."/>
            <person name="Arrowsmith C."/>
            <person name="Jagels K."/>
            <person name="Moule S."/>
            <person name="Mungall K."/>
            <person name="Saunders M."/>
            <person name="Whitehead S."/>
            <person name="Chabalgoity J.A."/>
            <person name="Maskell D."/>
            <person name="Humphreys T."/>
            <person name="Roberts M."/>
            <person name="Barrow P.A."/>
            <person name="Dougan G."/>
            <person name="Parkhill J."/>
        </authorList>
    </citation>
    <scope>NUCLEOTIDE SEQUENCE [LARGE SCALE GENOMIC DNA]</scope>
    <source>
        <strain>P125109</strain>
    </source>
</reference>